<gene>
    <name evidence="1" type="primary">rimM</name>
    <name type="ordered locus">BCE33L3601</name>
</gene>
<keyword id="KW-0143">Chaperone</keyword>
<keyword id="KW-0963">Cytoplasm</keyword>
<keyword id="KW-0690">Ribosome biogenesis</keyword>
<keyword id="KW-0698">rRNA processing</keyword>
<evidence type="ECO:0000255" key="1">
    <source>
        <dbReference type="HAMAP-Rule" id="MF_00014"/>
    </source>
</evidence>
<accession>Q636I4</accession>
<dbReference type="EMBL" id="CP000001">
    <property type="protein sequence ID" value="AAU16665.1"/>
    <property type="molecule type" value="Genomic_DNA"/>
</dbReference>
<dbReference type="RefSeq" id="WP_000170266.1">
    <property type="nucleotide sequence ID" value="NC_006274.1"/>
</dbReference>
<dbReference type="SMR" id="Q636I4"/>
<dbReference type="KEGG" id="bcz:BCE33L3601"/>
<dbReference type="PATRIC" id="fig|288681.22.peg.1810"/>
<dbReference type="Proteomes" id="UP000002612">
    <property type="component" value="Chromosome"/>
</dbReference>
<dbReference type="GO" id="GO:0005737">
    <property type="term" value="C:cytoplasm"/>
    <property type="evidence" value="ECO:0007669"/>
    <property type="project" value="UniProtKB-SubCell"/>
</dbReference>
<dbReference type="GO" id="GO:0005840">
    <property type="term" value="C:ribosome"/>
    <property type="evidence" value="ECO:0007669"/>
    <property type="project" value="InterPro"/>
</dbReference>
<dbReference type="GO" id="GO:0043022">
    <property type="term" value="F:ribosome binding"/>
    <property type="evidence" value="ECO:0007669"/>
    <property type="project" value="InterPro"/>
</dbReference>
<dbReference type="GO" id="GO:0042274">
    <property type="term" value="P:ribosomal small subunit biogenesis"/>
    <property type="evidence" value="ECO:0007669"/>
    <property type="project" value="UniProtKB-UniRule"/>
</dbReference>
<dbReference type="GO" id="GO:0006364">
    <property type="term" value="P:rRNA processing"/>
    <property type="evidence" value="ECO:0007669"/>
    <property type="project" value="UniProtKB-UniRule"/>
</dbReference>
<dbReference type="Gene3D" id="2.30.30.240">
    <property type="entry name" value="PRC-barrel domain"/>
    <property type="match status" value="1"/>
</dbReference>
<dbReference type="Gene3D" id="2.40.30.60">
    <property type="entry name" value="RimM"/>
    <property type="match status" value="1"/>
</dbReference>
<dbReference type="HAMAP" id="MF_00014">
    <property type="entry name" value="Ribosome_mat_RimM"/>
    <property type="match status" value="1"/>
</dbReference>
<dbReference type="InterPro" id="IPR027275">
    <property type="entry name" value="PRC-brl_dom"/>
</dbReference>
<dbReference type="InterPro" id="IPR011033">
    <property type="entry name" value="PRC_barrel-like_sf"/>
</dbReference>
<dbReference type="InterPro" id="IPR011961">
    <property type="entry name" value="RimM"/>
</dbReference>
<dbReference type="InterPro" id="IPR002676">
    <property type="entry name" value="RimM_N"/>
</dbReference>
<dbReference type="InterPro" id="IPR036976">
    <property type="entry name" value="RimM_N_sf"/>
</dbReference>
<dbReference type="InterPro" id="IPR009000">
    <property type="entry name" value="Transl_B-barrel_sf"/>
</dbReference>
<dbReference type="NCBIfam" id="TIGR02273">
    <property type="entry name" value="16S_RimM"/>
    <property type="match status" value="1"/>
</dbReference>
<dbReference type="PANTHER" id="PTHR33692">
    <property type="entry name" value="RIBOSOME MATURATION FACTOR RIMM"/>
    <property type="match status" value="1"/>
</dbReference>
<dbReference type="PANTHER" id="PTHR33692:SF1">
    <property type="entry name" value="RIBOSOME MATURATION FACTOR RIMM"/>
    <property type="match status" value="1"/>
</dbReference>
<dbReference type="Pfam" id="PF05239">
    <property type="entry name" value="PRC"/>
    <property type="match status" value="1"/>
</dbReference>
<dbReference type="Pfam" id="PF01782">
    <property type="entry name" value="RimM"/>
    <property type="match status" value="1"/>
</dbReference>
<dbReference type="SUPFAM" id="SSF50346">
    <property type="entry name" value="PRC-barrel domain"/>
    <property type="match status" value="1"/>
</dbReference>
<dbReference type="SUPFAM" id="SSF50447">
    <property type="entry name" value="Translation proteins"/>
    <property type="match status" value="1"/>
</dbReference>
<name>RIMM_BACCZ</name>
<organism>
    <name type="scientific">Bacillus cereus (strain ZK / E33L)</name>
    <dbReference type="NCBI Taxonomy" id="288681"/>
    <lineage>
        <taxon>Bacteria</taxon>
        <taxon>Bacillati</taxon>
        <taxon>Bacillota</taxon>
        <taxon>Bacilli</taxon>
        <taxon>Bacillales</taxon>
        <taxon>Bacillaceae</taxon>
        <taxon>Bacillus</taxon>
        <taxon>Bacillus cereus group</taxon>
    </lineage>
</organism>
<feature type="chain" id="PRO_0000163248" description="Ribosome maturation factor RimM">
    <location>
        <begin position="1"/>
        <end position="171"/>
    </location>
</feature>
<feature type="domain" description="PRC barrel" evidence="1">
    <location>
        <begin position="97"/>
        <end position="170"/>
    </location>
</feature>
<comment type="function">
    <text evidence="1">An accessory protein needed during the final step in the assembly of 30S ribosomal subunit, possibly for assembly of the head region. Essential for efficient processing of 16S rRNA. May be needed both before and after RbfA during the maturation of 16S rRNA. It has affinity for free ribosomal 30S subunits but not for 70S ribosomes.</text>
</comment>
<comment type="subunit">
    <text evidence="1">Binds ribosomal protein uS19.</text>
</comment>
<comment type="subcellular location">
    <subcellularLocation>
        <location evidence="1">Cytoplasm</location>
    </subcellularLocation>
</comment>
<comment type="domain">
    <text evidence="1">The PRC barrel domain binds ribosomal protein uS19.</text>
</comment>
<comment type="similarity">
    <text evidence="1">Belongs to the RimM family.</text>
</comment>
<reference key="1">
    <citation type="journal article" date="2006" name="J. Bacteriol.">
        <title>Pathogenomic sequence analysis of Bacillus cereus and Bacillus thuringiensis isolates closely related to Bacillus anthracis.</title>
        <authorList>
            <person name="Han C.S."/>
            <person name="Xie G."/>
            <person name="Challacombe J.F."/>
            <person name="Altherr M.R."/>
            <person name="Bhotika S.S."/>
            <person name="Bruce D."/>
            <person name="Campbell C.S."/>
            <person name="Campbell M.L."/>
            <person name="Chen J."/>
            <person name="Chertkov O."/>
            <person name="Cleland C."/>
            <person name="Dimitrijevic M."/>
            <person name="Doggett N.A."/>
            <person name="Fawcett J.J."/>
            <person name="Glavina T."/>
            <person name="Goodwin L.A."/>
            <person name="Hill K.K."/>
            <person name="Hitchcock P."/>
            <person name="Jackson P.J."/>
            <person name="Keim P."/>
            <person name="Kewalramani A.R."/>
            <person name="Longmire J."/>
            <person name="Lucas S."/>
            <person name="Malfatti S."/>
            <person name="McMurry K."/>
            <person name="Meincke L.J."/>
            <person name="Misra M."/>
            <person name="Moseman B.L."/>
            <person name="Mundt M."/>
            <person name="Munk A.C."/>
            <person name="Okinaka R.T."/>
            <person name="Parson-Quintana B."/>
            <person name="Reilly L.P."/>
            <person name="Richardson P."/>
            <person name="Robinson D.L."/>
            <person name="Rubin E."/>
            <person name="Saunders E."/>
            <person name="Tapia R."/>
            <person name="Tesmer J.G."/>
            <person name="Thayer N."/>
            <person name="Thompson L.S."/>
            <person name="Tice H."/>
            <person name="Ticknor L.O."/>
            <person name="Wills P.L."/>
            <person name="Brettin T.S."/>
            <person name="Gilna P."/>
        </authorList>
    </citation>
    <scope>NUCLEOTIDE SEQUENCE [LARGE SCALE GENOMIC DNA]</scope>
    <source>
        <strain>ZK / E33L</strain>
    </source>
</reference>
<sequence>MTKWFNVGKIVNTHGVKGEIRVVSLTDFPEERYKVGNTLYISNEKGGEPFPVKITSHRQHKTFDLLTFEGYGNVNEVEQFKGSLLKVPEDQLGELAEGEYYYHEIIGCNVVTEEGEALGTIKEVLSPGANDVWVIKRPKGQDLLIPYIDDVVLQVNIENKLVTIHVMEGLL</sequence>
<protein>
    <recommendedName>
        <fullName evidence="1">Ribosome maturation factor RimM</fullName>
    </recommendedName>
</protein>
<proteinExistence type="inferred from homology"/>